<evidence type="ECO:0000255" key="1"/>
<evidence type="ECO:0000255" key="2">
    <source>
        <dbReference type="PROSITE-ProRule" id="PRU00303"/>
    </source>
</evidence>
<evidence type="ECO:0000256" key="3">
    <source>
        <dbReference type="SAM" id="MobiDB-lite"/>
    </source>
</evidence>
<reference key="1">
    <citation type="journal article" date="1998" name="Nature">
        <title>The genome sequence of Rickettsia prowazekii and the origin of mitochondria.</title>
        <authorList>
            <person name="Andersson S.G.E."/>
            <person name="Zomorodipour A."/>
            <person name="Andersson J.O."/>
            <person name="Sicheritz-Ponten T."/>
            <person name="Alsmark U.C.M."/>
            <person name="Podowski R.M."/>
            <person name="Naeslund A.K."/>
            <person name="Eriksson A.-S."/>
            <person name="Winkler H.H."/>
            <person name="Kurland C.G."/>
        </authorList>
    </citation>
    <scope>NUCLEOTIDE SEQUENCE [LARGE SCALE GENOMIC DNA]</scope>
    <source>
        <strain>Madrid E</strain>
    </source>
</reference>
<proteinExistence type="inferred from homology"/>
<keyword id="KW-1003">Cell membrane</keyword>
<keyword id="KW-0175">Coiled coil</keyword>
<keyword id="KW-0449">Lipoprotein</keyword>
<keyword id="KW-0472">Membrane</keyword>
<keyword id="KW-0564">Palmitate</keyword>
<keyword id="KW-1185">Reference proteome</keyword>
<keyword id="KW-0732">Signal</keyword>
<organism>
    <name type="scientific">Rickettsia prowazekii (strain Madrid E)</name>
    <dbReference type="NCBI Taxonomy" id="272947"/>
    <lineage>
        <taxon>Bacteria</taxon>
        <taxon>Pseudomonadati</taxon>
        <taxon>Pseudomonadota</taxon>
        <taxon>Alphaproteobacteria</taxon>
        <taxon>Rickettsiales</taxon>
        <taxon>Rickettsiaceae</taxon>
        <taxon>Rickettsieae</taxon>
        <taxon>Rickettsia</taxon>
        <taxon>typhus group</taxon>
    </lineage>
</organism>
<accession>Q9ZE94</accession>
<name>Y051_RICPR</name>
<gene>
    <name type="ordered locus">RP051</name>
</gene>
<sequence length="127" mass="14544">MLKKIIFGITISLTTGCFANSTASNLSKKDVAKTNDVNTQKIIDDFSVYAGTIKPEVREEIQKYRVEIVDINKKKRELYNRLSKEAQSFLAEQQKYKQKLSIPKLLIENDPKNNTANSKDNNDKDMK</sequence>
<protein>
    <recommendedName>
        <fullName>Uncharacterized lipoprotein RP051</fullName>
    </recommendedName>
</protein>
<comment type="subcellular location">
    <subcellularLocation>
        <location evidence="2">Cell membrane</location>
        <topology evidence="2">Lipid-anchor</topology>
    </subcellularLocation>
</comment>
<dbReference type="EMBL" id="AJ235270">
    <property type="protein sequence ID" value="CAA14522.1"/>
    <property type="molecule type" value="Genomic_DNA"/>
</dbReference>
<dbReference type="PIR" id="C71713">
    <property type="entry name" value="C71713"/>
</dbReference>
<dbReference type="RefSeq" id="NP_220445.1">
    <property type="nucleotide sequence ID" value="NC_000963.1"/>
</dbReference>
<dbReference type="RefSeq" id="WP_004596623.1">
    <property type="nucleotide sequence ID" value="NC_000963.1"/>
</dbReference>
<dbReference type="SMR" id="Q9ZE94"/>
<dbReference type="EnsemblBacteria" id="CAA14522">
    <property type="protein sequence ID" value="CAA14522"/>
    <property type="gene ID" value="CAA14522"/>
</dbReference>
<dbReference type="KEGG" id="rpr:RP051"/>
<dbReference type="PATRIC" id="fig|272947.5.peg.52"/>
<dbReference type="HOGENOM" id="CLU_1968884_0_0_5"/>
<dbReference type="OrthoDB" id="7160930at2"/>
<dbReference type="Proteomes" id="UP000002480">
    <property type="component" value="Chromosome"/>
</dbReference>
<dbReference type="GO" id="GO:0005886">
    <property type="term" value="C:plasma membrane"/>
    <property type="evidence" value="ECO:0007669"/>
    <property type="project" value="UniProtKB-SubCell"/>
</dbReference>
<dbReference type="PROSITE" id="PS51257">
    <property type="entry name" value="PROKAR_LIPOPROTEIN"/>
    <property type="match status" value="1"/>
</dbReference>
<feature type="signal peptide" evidence="2">
    <location>
        <begin position="1"/>
        <end position="16"/>
    </location>
</feature>
<feature type="chain" id="PRO_0000262728" description="Uncharacterized lipoprotein RP051">
    <location>
        <begin position="17"/>
        <end position="127"/>
    </location>
</feature>
<feature type="region of interest" description="Disordered" evidence="3">
    <location>
        <begin position="102"/>
        <end position="127"/>
    </location>
</feature>
<feature type="coiled-coil region" evidence="1">
    <location>
        <begin position="56"/>
        <end position="101"/>
    </location>
</feature>
<feature type="lipid moiety-binding region" description="N-palmitoyl cysteine" evidence="2">
    <location>
        <position position="17"/>
    </location>
</feature>
<feature type="lipid moiety-binding region" description="S-diacylglycerol cysteine" evidence="2">
    <location>
        <position position="17"/>
    </location>
</feature>